<organism>
    <name type="scientific">Arabidopsis thaliana</name>
    <name type="common">Mouse-ear cress</name>
    <dbReference type="NCBI Taxonomy" id="3702"/>
    <lineage>
        <taxon>Eukaryota</taxon>
        <taxon>Viridiplantae</taxon>
        <taxon>Streptophyta</taxon>
        <taxon>Embryophyta</taxon>
        <taxon>Tracheophyta</taxon>
        <taxon>Spermatophyta</taxon>
        <taxon>Magnoliopsida</taxon>
        <taxon>eudicotyledons</taxon>
        <taxon>Gunneridae</taxon>
        <taxon>Pentapetalae</taxon>
        <taxon>rosids</taxon>
        <taxon>malvids</taxon>
        <taxon>Brassicales</taxon>
        <taxon>Brassicaceae</taxon>
        <taxon>Camelineae</taxon>
        <taxon>Arabidopsis</taxon>
    </lineage>
</organism>
<reference key="1">
    <citation type="journal article" date="2000" name="Nature">
        <title>Sequence and analysis of chromosome 1 of the plant Arabidopsis thaliana.</title>
        <authorList>
            <person name="Theologis A."/>
            <person name="Ecker J.R."/>
            <person name="Palm C.J."/>
            <person name="Federspiel N.A."/>
            <person name="Kaul S."/>
            <person name="White O."/>
            <person name="Alonso J."/>
            <person name="Altafi H."/>
            <person name="Araujo R."/>
            <person name="Bowman C.L."/>
            <person name="Brooks S.Y."/>
            <person name="Buehler E."/>
            <person name="Chan A."/>
            <person name="Chao Q."/>
            <person name="Chen H."/>
            <person name="Cheuk R.F."/>
            <person name="Chin C.W."/>
            <person name="Chung M.K."/>
            <person name="Conn L."/>
            <person name="Conway A.B."/>
            <person name="Conway A.R."/>
            <person name="Creasy T.H."/>
            <person name="Dewar K."/>
            <person name="Dunn P."/>
            <person name="Etgu P."/>
            <person name="Feldblyum T.V."/>
            <person name="Feng J.-D."/>
            <person name="Fong B."/>
            <person name="Fujii C.Y."/>
            <person name="Gill J.E."/>
            <person name="Goldsmith A.D."/>
            <person name="Haas B."/>
            <person name="Hansen N.F."/>
            <person name="Hughes B."/>
            <person name="Huizar L."/>
            <person name="Hunter J.L."/>
            <person name="Jenkins J."/>
            <person name="Johnson-Hopson C."/>
            <person name="Khan S."/>
            <person name="Khaykin E."/>
            <person name="Kim C.J."/>
            <person name="Koo H.L."/>
            <person name="Kremenetskaia I."/>
            <person name="Kurtz D.B."/>
            <person name="Kwan A."/>
            <person name="Lam B."/>
            <person name="Langin-Hooper S."/>
            <person name="Lee A."/>
            <person name="Lee J.M."/>
            <person name="Lenz C.A."/>
            <person name="Li J.H."/>
            <person name="Li Y.-P."/>
            <person name="Lin X."/>
            <person name="Liu S.X."/>
            <person name="Liu Z.A."/>
            <person name="Luros J.S."/>
            <person name="Maiti R."/>
            <person name="Marziali A."/>
            <person name="Militscher J."/>
            <person name="Miranda M."/>
            <person name="Nguyen M."/>
            <person name="Nierman W.C."/>
            <person name="Osborne B.I."/>
            <person name="Pai G."/>
            <person name="Peterson J."/>
            <person name="Pham P.K."/>
            <person name="Rizzo M."/>
            <person name="Rooney T."/>
            <person name="Rowley D."/>
            <person name="Sakano H."/>
            <person name="Salzberg S.L."/>
            <person name="Schwartz J.R."/>
            <person name="Shinn P."/>
            <person name="Southwick A.M."/>
            <person name="Sun H."/>
            <person name="Tallon L.J."/>
            <person name="Tambunga G."/>
            <person name="Toriumi M.J."/>
            <person name="Town C.D."/>
            <person name="Utterback T."/>
            <person name="Van Aken S."/>
            <person name="Vaysberg M."/>
            <person name="Vysotskaia V.S."/>
            <person name="Walker M."/>
            <person name="Wu D."/>
            <person name="Yu G."/>
            <person name="Fraser C.M."/>
            <person name="Venter J.C."/>
            <person name="Davis R.W."/>
        </authorList>
    </citation>
    <scope>NUCLEOTIDE SEQUENCE [LARGE SCALE GENOMIC DNA]</scope>
    <source>
        <strain>cv. Columbia</strain>
    </source>
</reference>
<reference key="2">
    <citation type="journal article" date="2017" name="Plant J.">
        <title>Araport11: a complete reannotation of the Arabidopsis thaliana reference genome.</title>
        <authorList>
            <person name="Cheng C.Y."/>
            <person name="Krishnakumar V."/>
            <person name="Chan A.P."/>
            <person name="Thibaud-Nissen F."/>
            <person name="Schobel S."/>
            <person name="Town C.D."/>
        </authorList>
    </citation>
    <scope>GENOME REANNOTATION</scope>
    <source>
        <strain>cv. Columbia</strain>
    </source>
</reference>
<reference key="3">
    <citation type="journal article" date="2003" name="Science">
        <title>Empirical analysis of transcriptional activity in the Arabidopsis genome.</title>
        <authorList>
            <person name="Yamada K."/>
            <person name="Lim J."/>
            <person name="Dale J.M."/>
            <person name="Chen H."/>
            <person name="Shinn P."/>
            <person name="Palm C.J."/>
            <person name="Southwick A.M."/>
            <person name="Wu H.C."/>
            <person name="Kim C.J."/>
            <person name="Nguyen M."/>
            <person name="Pham P.K."/>
            <person name="Cheuk R.F."/>
            <person name="Karlin-Newmann G."/>
            <person name="Liu S.X."/>
            <person name="Lam B."/>
            <person name="Sakano H."/>
            <person name="Wu T."/>
            <person name="Yu G."/>
            <person name="Miranda M."/>
            <person name="Quach H.L."/>
            <person name="Tripp M."/>
            <person name="Chang C.H."/>
            <person name="Lee J.M."/>
            <person name="Toriumi M.J."/>
            <person name="Chan M.M."/>
            <person name="Tang C.C."/>
            <person name="Onodera C.S."/>
            <person name="Deng J.M."/>
            <person name="Akiyama K."/>
            <person name="Ansari Y."/>
            <person name="Arakawa T."/>
            <person name="Banh J."/>
            <person name="Banno F."/>
            <person name="Bowser L."/>
            <person name="Brooks S.Y."/>
            <person name="Carninci P."/>
            <person name="Chao Q."/>
            <person name="Choy N."/>
            <person name="Enju A."/>
            <person name="Goldsmith A.D."/>
            <person name="Gurjal M."/>
            <person name="Hansen N.F."/>
            <person name="Hayashizaki Y."/>
            <person name="Johnson-Hopson C."/>
            <person name="Hsuan V.W."/>
            <person name="Iida K."/>
            <person name="Karnes M."/>
            <person name="Khan S."/>
            <person name="Koesema E."/>
            <person name="Ishida J."/>
            <person name="Jiang P.X."/>
            <person name="Jones T."/>
            <person name="Kawai J."/>
            <person name="Kamiya A."/>
            <person name="Meyers C."/>
            <person name="Nakajima M."/>
            <person name="Narusaka M."/>
            <person name="Seki M."/>
            <person name="Sakurai T."/>
            <person name="Satou M."/>
            <person name="Tamse R."/>
            <person name="Vaysberg M."/>
            <person name="Wallender E.K."/>
            <person name="Wong C."/>
            <person name="Yamamura Y."/>
            <person name="Yuan S."/>
            <person name="Shinozaki K."/>
            <person name="Davis R.W."/>
            <person name="Theologis A."/>
            <person name="Ecker J.R."/>
        </authorList>
    </citation>
    <scope>NUCLEOTIDE SEQUENCE [LARGE SCALE MRNA]</scope>
    <source>
        <strain>cv. Columbia</strain>
    </source>
</reference>
<reference key="4">
    <citation type="journal article" date="2002" name="Science">
        <title>Functional annotation of a full-length Arabidopsis cDNA collection.</title>
        <authorList>
            <person name="Seki M."/>
            <person name="Narusaka M."/>
            <person name="Kamiya A."/>
            <person name="Ishida J."/>
            <person name="Satou M."/>
            <person name="Sakurai T."/>
            <person name="Nakajima M."/>
            <person name="Enju A."/>
            <person name="Akiyama K."/>
            <person name="Oono Y."/>
            <person name="Muramatsu M."/>
            <person name="Hayashizaki Y."/>
            <person name="Kawai J."/>
            <person name="Carninci P."/>
            <person name="Itoh M."/>
            <person name="Ishii Y."/>
            <person name="Arakawa T."/>
            <person name="Shibata K."/>
            <person name="Shinagawa A."/>
            <person name="Shinozaki K."/>
        </authorList>
    </citation>
    <scope>NUCLEOTIDE SEQUENCE [LARGE SCALE MRNA]</scope>
    <source>
        <strain>cv. Columbia</strain>
    </source>
</reference>
<reference key="5">
    <citation type="submission" date="2002-03" db="EMBL/GenBank/DDBJ databases">
        <title>Full-length cDNA from Arabidopsis thaliana.</title>
        <authorList>
            <person name="Brover V.V."/>
            <person name="Troukhan M.E."/>
            <person name="Alexandrov N.A."/>
            <person name="Lu Y.-P."/>
            <person name="Flavell R.B."/>
            <person name="Feldmann K.A."/>
        </authorList>
    </citation>
    <scope>NUCLEOTIDE SEQUENCE [LARGE SCALE MRNA]</scope>
</reference>
<reference key="6">
    <citation type="journal article" date="2008" name="Plant Physiol.">
        <title>Enhanced tolerance to oxidative stress in transgenic Arabidopsis plants expressing proteins of unknown function.</title>
        <authorList>
            <person name="Luhua S."/>
            <person name="Ciftci-Yilmaz S."/>
            <person name="Harper J."/>
            <person name="Cushman J."/>
            <person name="Mittler R."/>
        </authorList>
    </citation>
    <scope>IDENTIFICATION</scope>
</reference>
<reference key="7">
    <citation type="journal article" date="2016" name="Front. Plant Sci.">
        <title>A clade-specific Arabidopsis gene connects primary metabolism and senescence.</title>
        <authorList>
            <person name="Jones D.C."/>
            <person name="Zheng W."/>
            <person name="Huang S."/>
            <person name="Du C."/>
            <person name="Zhao X."/>
            <person name="Yennamalli R.M."/>
            <person name="Sen T.Z."/>
            <person name="Nettleton D."/>
            <person name="Wurtele E.S."/>
            <person name="Li L."/>
        </authorList>
    </citation>
    <scope>FUNCTION</scope>
    <scope>DISRUPTION PHENOTYPE</scope>
    <scope>DEVELOPMENTAL STAGE</scope>
    <scope>TISSUE SPECIFICITY</scope>
    <scope>INDUCTION BY DROUGHT; HYDROGEN PEROXIDE; CYTOKININ; JASMONIC ACID; ETHYLENE AND HIGH LIGHT</scope>
    <source>
        <strain>cv. Columbia</strain>
    </source>
</reference>
<feature type="chain" id="PRO_0000461385" description="Senescence-associated and QQS-related protein">
    <location>
        <begin position="1"/>
        <end position="85"/>
    </location>
</feature>
<feature type="region of interest" description="Disordered" evidence="1">
    <location>
        <begin position="1"/>
        <end position="35"/>
    </location>
</feature>
<feature type="region of interest" description="Disordered" evidence="1">
    <location>
        <begin position="55"/>
        <end position="85"/>
    </location>
</feature>
<feature type="compositionally biased region" description="Basic and acidic residues" evidence="1">
    <location>
        <begin position="1"/>
        <end position="24"/>
    </location>
</feature>
<feature type="compositionally biased region" description="Polar residues" evidence="1">
    <location>
        <begin position="58"/>
        <end position="77"/>
    </location>
</feature>
<feature type="sequence conflict" description="In Ref. 5; AAM60897." evidence="5" ref="5">
    <original>A</original>
    <variation>T</variation>
    <location>
        <position position="58"/>
    </location>
</feature>
<evidence type="ECO:0000256" key="1">
    <source>
        <dbReference type="SAM" id="MobiDB-lite"/>
    </source>
</evidence>
<evidence type="ECO:0000269" key="2">
    <source>
    </source>
</evidence>
<evidence type="ECO:0000303" key="3">
    <source>
    </source>
</evidence>
<evidence type="ECO:0000303" key="4">
    <source>
    </source>
</evidence>
<evidence type="ECO:0000305" key="5"/>
<evidence type="ECO:0000312" key="6">
    <source>
        <dbReference type="Araport" id="AT1G64360"/>
    </source>
</evidence>
<evidence type="ECO:0000312" key="7">
    <source>
        <dbReference type="EMBL" id="AAG51721.1"/>
    </source>
</evidence>
<sequence>MSFRKVEKKPTEMGRNMTHEKSDSDSDNEGAPMTVGGYTEFVARSDSDWDEPVYSGKARSNYNLTGTAKGTGPINSFSRKHFPNY</sequence>
<keyword id="KW-1185">Reference proteome</keyword>
<comment type="function">
    <text evidence="2">Plays a role in carbon allocation, including during senescence and stresses, thus impacting starch accumulation.</text>
</comment>
<comment type="tissue specificity">
    <text evidence="2">Expressed predominantly within leaves and cotyledons vasculatures (PubMed:27462324). Mainly observed in fully expanded leaves, at the base of mature inflorescences, in senescing leaves and cauline leaves, and, to a lower extent, in hypocotyls and rosette leaves prior to flowering (PubMed:27462324).</text>
</comment>
<comment type="developmental stage">
    <text evidence="2">Accumulates after leaf expansion and photosynthetic capacity have peaked, during senescence onset (PubMed:27462324). Also expressed in aging cauline leaves, stigma of flowers, and funiculus and receptacle of siliques (PubMed:27462324).</text>
</comment>
<comment type="induction">
    <text evidence="2">Accumulates upon light induced oxidative stress and after hydrogen peroxide H(2)O(2) treatment (PubMed:27462324). Induced by drought (PubMed:27462324). Negatively influenced by QQS (PubMed:27462324). Reduced levels in response to cytokinin (CK) and methyl jasmonate (MeJA), but increased levels in response to ethylene (ET) (PubMed:27462324).</text>
</comment>
<comment type="disruption phenotype">
    <text evidence="2">Reduced accumulation of starch content.</text>
</comment>
<accession>Q9C7W0</accession>
<accession>Q8LGF1</accession>
<gene>
    <name evidence="4" type="primary">SAQR</name>
    <name evidence="3" type="synonym">U61211</name>
    <name evidence="6" type="ordered locus">At1g64360</name>
    <name evidence="7" type="ORF">F15H21.8</name>
</gene>
<dbReference type="EMBL" id="AC066689">
    <property type="protein sequence ID" value="AAG51721.1"/>
    <property type="molecule type" value="Genomic_DNA"/>
</dbReference>
<dbReference type="EMBL" id="CP002684">
    <property type="protein sequence ID" value="AEE34232.1"/>
    <property type="molecule type" value="Genomic_DNA"/>
</dbReference>
<dbReference type="EMBL" id="BT004667">
    <property type="protein sequence ID" value="AAO42913.1"/>
    <property type="molecule type" value="mRNA"/>
</dbReference>
<dbReference type="EMBL" id="AK119154">
    <property type="protein sequence ID" value="BAC43724.1"/>
    <property type="molecule type" value="mRNA"/>
</dbReference>
<dbReference type="EMBL" id="AY084308">
    <property type="protein sequence ID" value="AAM60897.1"/>
    <property type="molecule type" value="mRNA"/>
</dbReference>
<dbReference type="PIR" id="F96667">
    <property type="entry name" value="F96667"/>
</dbReference>
<dbReference type="RefSeq" id="NP_564832.1">
    <property type="nucleotide sequence ID" value="NM_105111.5"/>
</dbReference>
<dbReference type="STRING" id="3702.Q9C7W0"/>
<dbReference type="PaxDb" id="3702-AT1G64360.1"/>
<dbReference type="ProteomicsDB" id="180878"/>
<dbReference type="DNASU" id="842743"/>
<dbReference type="EnsemblPlants" id="AT1G64360.1">
    <property type="protein sequence ID" value="AT1G64360.1"/>
    <property type="gene ID" value="AT1G64360"/>
</dbReference>
<dbReference type="GeneID" id="842743"/>
<dbReference type="Gramene" id="AT1G64360.1">
    <property type="protein sequence ID" value="AT1G64360.1"/>
    <property type="gene ID" value="AT1G64360"/>
</dbReference>
<dbReference type="KEGG" id="ath:AT1G64360"/>
<dbReference type="Araport" id="AT1G64360"/>
<dbReference type="TAIR" id="AT1G64360">
    <property type="gene designation" value="SAQR"/>
</dbReference>
<dbReference type="HOGENOM" id="CLU_2577106_0_0_1"/>
<dbReference type="OMA" id="KPTEMGR"/>
<dbReference type="OrthoDB" id="1026506at2759"/>
<dbReference type="Proteomes" id="UP000006548">
    <property type="component" value="Chromosome 1"/>
</dbReference>
<dbReference type="ExpressionAtlas" id="Q9C7W0">
    <property type="expression patterns" value="baseline and differential"/>
</dbReference>
<dbReference type="GO" id="GO:0010150">
    <property type="term" value="P:leaf senescence"/>
    <property type="evidence" value="ECO:0000270"/>
    <property type="project" value="TAIR"/>
</dbReference>
<dbReference type="GO" id="GO:2000904">
    <property type="term" value="P:regulation of starch metabolic process"/>
    <property type="evidence" value="ECO:0000315"/>
    <property type="project" value="UniProtKB"/>
</dbReference>
<dbReference type="GO" id="GO:0009735">
    <property type="term" value="P:response to cytokinin"/>
    <property type="evidence" value="ECO:0000270"/>
    <property type="project" value="UniProtKB"/>
</dbReference>
<dbReference type="GO" id="GO:0009723">
    <property type="term" value="P:response to ethylene"/>
    <property type="evidence" value="ECO:0000270"/>
    <property type="project" value="UniProtKB"/>
</dbReference>
<dbReference type="GO" id="GO:0042542">
    <property type="term" value="P:response to hydrogen peroxide"/>
    <property type="evidence" value="ECO:0000270"/>
    <property type="project" value="UniProtKB"/>
</dbReference>
<dbReference type="GO" id="GO:0009753">
    <property type="term" value="P:response to jasmonic acid"/>
    <property type="evidence" value="ECO:0000270"/>
    <property type="project" value="UniProtKB"/>
</dbReference>
<dbReference type="GO" id="GO:0006979">
    <property type="term" value="P:response to oxidative stress"/>
    <property type="evidence" value="ECO:0000315"/>
    <property type="project" value="TAIR"/>
</dbReference>
<dbReference type="GO" id="GO:0009611">
    <property type="term" value="P:response to wounding"/>
    <property type="evidence" value="ECO:0000270"/>
    <property type="project" value="UniProtKB"/>
</dbReference>
<proteinExistence type="evidence at transcript level"/>
<name>SAQR_ARATH</name>
<protein>
    <recommendedName>
        <fullName evidence="4">Senescence-associated and QQS-related protein</fullName>
    </recommendedName>
</protein>